<organism>
    <name type="scientific">Human adenovirus C serotype 5</name>
    <name type="common">HAdV-5</name>
    <name type="synonym">Human adenovirus 5</name>
    <dbReference type="NCBI Taxonomy" id="28285"/>
    <lineage>
        <taxon>Viruses</taxon>
        <taxon>Varidnaviria</taxon>
        <taxon>Bamfordvirae</taxon>
        <taxon>Preplasmiviricota</taxon>
        <taxon>Tectiliviricetes</taxon>
        <taxon>Rowavirales</taxon>
        <taxon>Adenoviridae</taxon>
        <taxon>Mastadenovirus</taxon>
        <taxon>Human mastadenovirus C</taxon>
    </lineage>
</organism>
<name>E3145_ADE05</name>
<comment type="function">
    <text>Protects virus-infected cells from TNF-induced cytolysis.</text>
</comment>
<comment type="similarity">
    <text evidence="1">Belongs to the adenoviridae E3_15 family.</text>
</comment>
<keyword id="KW-0244">Early protein</keyword>
<keyword id="KW-0945">Host-virus interaction</keyword>
<keyword id="KW-1085">Inhibition of host caspases by virus</keyword>
<keyword id="KW-1119">Modulation of host cell apoptosis by virus</keyword>
<keyword id="KW-1185">Reference proteome</keyword>
<sequence length="128" mass="14598">MTDTLDLEMDGIITEQRLLERRRAAAEQQRMNQELQDMVNLHQCKRGIFCLVKQAKVTYDSNTTGHRLSYKLPTKRQKLVVMVGEKPITITQHSVETEGCIHSPCQGPEDLCTLIKTLCGLKDLIPFN</sequence>
<evidence type="ECO:0000305" key="1"/>
<proteinExistence type="inferred from homology"/>
<organismHost>
    <name type="scientific">Homo sapiens</name>
    <name type="common">Human</name>
    <dbReference type="NCBI Taxonomy" id="9606"/>
</organismHost>
<dbReference type="EMBL" id="M73260">
    <property type="status" value="NOT_ANNOTATED_CDS"/>
    <property type="molecule type" value="Genomic_DNA"/>
</dbReference>
<dbReference type="EMBL" id="X03002">
    <property type="protein sequence ID" value="CAA26787.1"/>
    <property type="molecule type" value="Genomic_DNA"/>
</dbReference>
<dbReference type="PIR" id="A03819">
    <property type="entry name" value="ERAD45"/>
</dbReference>
<dbReference type="RefSeq" id="AP_000224.1">
    <property type="nucleotide sequence ID" value="AC_000008.1"/>
</dbReference>
<dbReference type="Proteomes" id="UP000004992">
    <property type="component" value="Genome"/>
</dbReference>
<dbReference type="GO" id="GO:0052031">
    <property type="term" value="P:symbiont-mediated perturbation of host defense response"/>
    <property type="evidence" value="ECO:0007669"/>
    <property type="project" value="InterPro"/>
</dbReference>
<dbReference type="GO" id="GO:0033668">
    <property type="term" value="P:symbiont-mediated suppression of host apoptosis"/>
    <property type="evidence" value="ECO:0007669"/>
    <property type="project" value="UniProtKB-KW"/>
</dbReference>
<dbReference type="InterPro" id="IPR004985">
    <property type="entry name" value="Adeno_E3-15"/>
</dbReference>
<dbReference type="Pfam" id="PF03307">
    <property type="entry name" value="Adeno_E3_15_3"/>
    <property type="match status" value="1"/>
</dbReference>
<feature type="chain" id="PRO_0000221747" description="Early E3 14.5 kDa protein">
    <location>
        <begin position="1"/>
        <end position="128"/>
    </location>
</feature>
<protein>
    <recommendedName>
        <fullName>Early E3 14.5 kDa protein</fullName>
    </recommendedName>
</protein>
<reference key="1">
    <citation type="journal article" date="1985" name="Virology">
        <title>DNA sequence of the early E3 transcription unit of adenovirus 5.</title>
        <authorList>
            <person name="Cladaras C."/>
            <person name="Wold W.S.M."/>
        </authorList>
    </citation>
    <scope>NUCLEOTIDE SEQUENCE [GENOMIC DNA]</scope>
</reference>
<reference key="2">
    <citation type="journal article" date="1992" name="Virology">
        <title>The sequence of the genome of adenovirus type 5 and its comparison with the genome of adenovirus type 2.</title>
        <authorList>
            <person name="Chroboczek J."/>
            <person name="Bieber F."/>
            <person name="Jacrot B."/>
        </authorList>
    </citation>
    <scope>NUCLEOTIDE SEQUENCE [LARGE SCALE GENOMIC DNA]</scope>
</reference>
<reference key="3">
    <citation type="journal article" date="1990" name="J. Virol.">
        <title>A protein serologically and functionally related to the group C E3 14,700-kilodalton protein is found in multiple adenovirus serotypes.</title>
        <authorList>
            <person name="Horton T.H."/>
            <person name="Tollefson A.E."/>
            <person name="Wold W.S.M."/>
            <person name="Gooding L.R."/>
        </authorList>
    </citation>
    <scope>IDENTIFICATION OF PROTEIN</scope>
</reference>
<accession>P04493</accession>